<dbReference type="EC" id="2.3.2.27"/>
<dbReference type="EMBL" id="AK290129">
    <property type="protein sequence ID" value="BAF82818.1"/>
    <property type="molecule type" value="mRNA"/>
</dbReference>
<dbReference type="EMBL" id="AC004507">
    <property type="status" value="NOT_ANNOTATED_CDS"/>
    <property type="molecule type" value="Genomic_DNA"/>
</dbReference>
<dbReference type="EMBL" id="AC005221">
    <property type="status" value="NOT_ANNOTATED_CDS"/>
    <property type="molecule type" value="Genomic_DNA"/>
</dbReference>
<dbReference type="EMBL" id="AC093532">
    <property type="status" value="NOT_ANNOTATED_CDS"/>
    <property type="molecule type" value="Genomic_DNA"/>
</dbReference>
<dbReference type="EMBL" id="AC137794">
    <property type="status" value="NOT_ANNOTATED_CDS"/>
    <property type="molecule type" value="Genomic_DNA"/>
</dbReference>
<dbReference type="EMBL" id="CH471062">
    <property type="protein sequence ID" value="EAW62412.1"/>
    <property type="molecule type" value="Genomic_DNA"/>
</dbReference>
<dbReference type="EMBL" id="CH471062">
    <property type="protein sequence ID" value="EAW62413.1"/>
    <property type="molecule type" value="Genomic_DNA"/>
</dbReference>
<dbReference type="EMBL" id="BC047569">
    <property type="protein sequence ID" value="AAH47569.1"/>
    <property type="molecule type" value="mRNA"/>
</dbReference>
<dbReference type="EMBL" id="BC146948">
    <property type="protein sequence ID" value="AAI46949.1"/>
    <property type="molecule type" value="mRNA"/>
</dbReference>
<dbReference type="EMBL" id="BC146964">
    <property type="protein sequence ID" value="AAI46965.1"/>
    <property type="molecule type" value="mRNA"/>
</dbReference>
<dbReference type="CCDS" id="CCDS4141.1">
    <molecule id="Q86UD3-1"/>
</dbReference>
<dbReference type="RefSeq" id="NP_848545.1">
    <molecule id="Q86UD3-1"/>
    <property type="nucleotide sequence ID" value="NM_178450.5"/>
</dbReference>
<dbReference type="SMR" id="Q86UD3"/>
<dbReference type="BioGRID" id="125416">
    <property type="interactions" value="42"/>
</dbReference>
<dbReference type="FunCoup" id="Q86UD3">
    <property type="interactions" value="578"/>
</dbReference>
<dbReference type="IntAct" id="Q86UD3">
    <property type="interactions" value="11"/>
</dbReference>
<dbReference type="MINT" id="Q86UD3"/>
<dbReference type="STRING" id="9606.ENSP00000309141"/>
<dbReference type="TCDB" id="8.A.159.1.9">
    <property type="family name" value="the march ubiquitin ligase (march) family"/>
</dbReference>
<dbReference type="GlyGen" id="Q86UD3">
    <property type="glycosylation" value="1 site, 1 O-linked glycan (1 site)"/>
</dbReference>
<dbReference type="iPTMnet" id="Q86UD3"/>
<dbReference type="PhosphoSitePlus" id="Q86UD3"/>
<dbReference type="BioMuta" id="MARCH3"/>
<dbReference type="DMDM" id="59798460"/>
<dbReference type="jPOST" id="Q86UD3"/>
<dbReference type="MassIVE" id="Q86UD3"/>
<dbReference type="PaxDb" id="9606-ENSP00000309141"/>
<dbReference type="PeptideAtlas" id="Q86UD3"/>
<dbReference type="Antibodypedia" id="25757">
    <property type="antibodies" value="163 antibodies from 27 providers"/>
</dbReference>
<dbReference type="DNASU" id="115123"/>
<dbReference type="Ensembl" id="ENST00000308660.6">
    <molecule id="Q86UD3-1"/>
    <property type="protein sequence ID" value="ENSP00000309141.5"/>
    <property type="gene ID" value="ENSG00000173926.6"/>
</dbReference>
<dbReference type="Ensembl" id="ENST00000515241.1">
    <molecule id="Q86UD3-2"/>
    <property type="protein sequence ID" value="ENSP00000421979.1"/>
    <property type="gene ID" value="ENSG00000173926.6"/>
</dbReference>
<dbReference type="GeneID" id="115123"/>
<dbReference type="KEGG" id="hsa:115123"/>
<dbReference type="MANE-Select" id="ENST00000308660.6">
    <property type="protein sequence ID" value="ENSP00000309141.5"/>
    <property type="RefSeq nucleotide sequence ID" value="NM_178450.5"/>
    <property type="RefSeq protein sequence ID" value="NP_848545.1"/>
</dbReference>
<dbReference type="UCSC" id="uc003kuf.4">
    <molecule id="Q86UD3-1"/>
    <property type="organism name" value="human"/>
</dbReference>
<dbReference type="AGR" id="HGNC:28728"/>
<dbReference type="CTD" id="115123"/>
<dbReference type="DisGeNET" id="115123"/>
<dbReference type="GeneCards" id="MARCHF3"/>
<dbReference type="HGNC" id="HGNC:28728">
    <property type="gene designation" value="MARCHF3"/>
</dbReference>
<dbReference type="HPA" id="ENSG00000173926">
    <property type="expression patterns" value="Low tissue specificity"/>
</dbReference>
<dbReference type="MIM" id="613333">
    <property type="type" value="gene"/>
</dbReference>
<dbReference type="neXtProt" id="NX_Q86UD3"/>
<dbReference type="OpenTargets" id="ENSG00000173926"/>
<dbReference type="VEuPathDB" id="HostDB:ENSG00000173926"/>
<dbReference type="eggNOG" id="KOG1609">
    <property type="taxonomic scope" value="Eukaryota"/>
</dbReference>
<dbReference type="GeneTree" id="ENSGT00940000159206"/>
<dbReference type="HOGENOM" id="CLU_096532_0_0_1"/>
<dbReference type="InParanoid" id="Q86UD3"/>
<dbReference type="OMA" id="FNDQPIC"/>
<dbReference type="OrthoDB" id="273089at2759"/>
<dbReference type="PAN-GO" id="Q86UD3">
    <property type="GO annotations" value="2 GO annotations based on evolutionary models"/>
</dbReference>
<dbReference type="PhylomeDB" id="Q86UD3"/>
<dbReference type="TreeFam" id="TF319557"/>
<dbReference type="PathwayCommons" id="Q86UD3"/>
<dbReference type="SignaLink" id="Q86UD3"/>
<dbReference type="SIGNOR" id="Q86UD3"/>
<dbReference type="UniPathway" id="UPA00143"/>
<dbReference type="BioGRID-ORCS" id="115123">
    <property type="hits" value="30 hits in 1108 CRISPR screens"/>
</dbReference>
<dbReference type="ChiTaRS" id="MARCH3">
    <property type="organism name" value="human"/>
</dbReference>
<dbReference type="GenomeRNAi" id="115123"/>
<dbReference type="Pharos" id="Q86UD3">
    <property type="development level" value="Tbio"/>
</dbReference>
<dbReference type="PRO" id="PR:Q86UD3"/>
<dbReference type="Proteomes" id="UP000005640">
    <property type="component" value="Chromosome 5"/>
</dbReference>
<dbReference type="RNAct" id="Q86UD3">
    <property type="molecule type" value="protein"/>
</dbReference>
<dbReference type="Bgee" id="ENSG00000173926">
    <property type="expression patterns" value="Expressed in pancreatic ductal cell and 147 other cell types or tissues"/>
</dbReference>
<dbReference type="GO" id="GO:0031901">
    <property type="term" value="C:early endosome membrane"/>
    <property type="evidence" value="ECO:0007669"/>
    <property type="project" value="UniProtKB-SubCell"/>
</dbReference>
<dbReference type="GO" id="GO:0005768">
    <property type="term" value="C:endosome"/>
    <property type="evidence" value="ECO:0000314"/>
    <property type="project" value="UniProtKB"/>
</dbReference>
<dbReference type="GO" id="GO:0043231">
    <property type="term" value="C:intracellular membrane-bounded organelle"/>
    <property type="evidence" value="ECO:0000314"/>
    <property type="project" value="HPA"/>
</dbReference>
<dbReference type="GO" id="GO:0005764">
    <property type="term" value="C:lysosome"/>
    <property type="evidence" value="ECO:0000314"/>
    <property type="project" value="UniProtKB"/>
</dbReference>
<dbReference type="GO" id="GO:0004842">
    <property type="term" value="F:ubiquitin-protein transferase activity"/>
    <property type="evidence" value="ECO:0000318"/>
    <property type="project" value="GO_Central"/>
</dbReference>
<dbReference type="GO" id="GO:0008270">
    <property type="term" value="F:zinc ion binding"/>
    <property type="evidence" value="ECO:0007669"/>
    <property type="project" value="UniProtKB-KW"/>
</dbReference>
<dbReference type="GO" id="GO:0006897">
    <property type="term" value="P:endocytosis"/>
    <property type="evidence" value="ECO:0007669"/>
    <property type="project" value="UniProtKB-KW"/>
</dbReference>
<dbReference type="GO" id="GO:0016567">
    <property type="term" value="P:protein ubiquitination"/>
    <property type="evidence" value="ECO:0000318"/>
    <property type="project" value="GO_Central"/>
</dbReference>
<dbReference type="CDD" id="cd16809">
    <property type="entry name" value="RING_CH-C4HC3_MARCH3"/>
    <property type="match status" value="1"/>
</dbReference>
<dbReference type="FunFam" id="3.30.40.10:FF:000119">
    <property type="entry name" value="E3 ubiquitin-protein ligase MARCH2"/>
    <property type="match status" value="1"/>
</dbReference>
<dbReference type="Gene3D" id="3.30.40.10">
    <property type="entry name" value="Zinc/RING finger domain, C3HC4 (zinc finger)"/>
    <property type="match status" value="1"/>
</dbReference>
<dbReference type="InterPro" id="IPR001841">
    <property type="entry name" value="Znf_RING"/>
</dbReference>
<dbReference type="InterPro" id="IPR011016">
    <property type="entry name" value="Znf_RING-CH"/>
</dbReference>
<dbReference type="InterPro" id="IPR013083">
    <property type="entry name" value="Znf_RING/FYVE/PHD"/>
</dbReference>
<dbReference type="PANTHER" id="PTHR46065">
    <property type="entry name" value="E3 UBIQUITIN-PROTEIN LIGASE MARCH 2/3 FAMILY MEMBER"/>
    <property type="match status" value="1"/>
</dbReference>
<dbReference type="PANTHER" id="PTHR46065:SF2">
    <property type="entry name" value="E3 UBIQUITIN-PROTEIN LIGASE MARCHF3"/>
    <property type="match status" value="1"/>
</dbReference>
<dbReference type="Pfam" id="PF12906">
    <property type="entry name" value="RINGv"/>
    <property type="match status" value="1"/>
</dbReference>
<dbReference type="SMART" id="SM00744">
    <property type="entry name" value="RINGv"/>
    <property type="match status" value="1"/>
</dbReference>
<dbReference type="SUPFAM" id="SSF57850">
    <property type="entry name" value="RING/U-box"/>
    <property type="match status" value="1"/>
</dbReference>
<dbReference type="PROSITE" id="PS51292">
    <property type="entry name" value="ZF_RING_CH"/>
    <property type="match status" value="1"/>
</dbReference>
<name>MARH3_HUMAN</name>
<evidence type="ECO:0000250" key="1"/>
<evidence type="ECO:0000250" key="2">
    <source>
        <dbReference type="UniProtKB" id="Q5XIE5"/>
    </source>
</evidence>
<evidence type="ECO:0000255" key="3"/>
<evidence type="ECO:0000255" key="4">
    <source>
        <dbReference type="PROSITE-ProRule" id="PRU00623"/>
    </source>
</evidence>
<evidence type="ECO:0000269" key="5">
    <source>
    </source>
</evidence>
<evidence type="ECO:0000269" key="6">
    <source>
    </source>
</evidence>
<evidence type="ECO:0000303" key="7">
    <source>
    </source>
</evidence>
<evidence type="ECO:0000305" key="8"/>
<evidence type="ECO:0000312" key="9">
    <source>
        <dbReference type="HGNC" id="HGNC:28728"/>
    </source>
</evidence>
<evidence type="ECO:0007744" key="10">
    <source>
    </source>
</evidence>
<organism>
    <name type="scientific">Homo sapiens</name>
    <name type="common">Human</name>
    <dbReference type="NCBI Taxonomy" id="9606"/>
    <lineage>
        <taxon>Eukaryota</taxon>
        <taxon>Metazoa</taxon>
        <taxon>Chordata</taxon>
        <taxon>Craniata</taxon>
        <taxon>Vertebrata</taxon>
        <taxon>Euteleostomi</taxon>
        <taxon>Mammalia</taxon>
        <taxon>Eutheria</taxon>
        <taxon>Euarchontoglires</taxon>
        <taxon>Primates</taxon>
        <taxon>Haplorrhini</taxon>
        <taxon>Catarrhini</taxon>
        <taxon>Hominidae</taxon>
        <taxon>Homo</taxon>
    </lineage>
</organism>
<feature type="chain" id="PRO_0000055927" description="E3 ubiquitin-protein ligase MARCHF3">
    <location>
        <begin position="1"/>
        <end position="253"/>
    </location>
</feature>
<feature type="transmembrane region" description="Helical" evidence="3">
    <location>
        <begin position="145"/>
        <end position="165"/>
    </location>
</feature>
<feature type="transmembrane region" description="Helical" evidence="3">
    <location>
        <begin position="182"/>
        <end position="202"/>
    </location>
</feature>
<feature type="zinc finger region" description="RING-CH-type" evidence="4">
    <location>
        <begin position="63"/>
        <end position="123"/>
    </location>
</feature>
<feature type="binding site" evidence="4">
    <location>
        <position position="71"/>
    </location>
    <ligand>
        <name>Zn(2+)</name>
        <dbReference type="ChEBI" id="CHEBI:29105"/>
        <label>1</label>
    </ligand>
</feature>
<feature type="binding site" evidence="4">
    <location>
        <position position="74"/>
    </location>
    <ligand>
        <name>Zn(2+)</name>
        <dbReference type="ChEBI" id="CHEBI:29105"/>
        <label>1</label>
    </ligand>
</feature>
<feature type="binding site" evidence="4">
    <location>
        <position position="87"/>
    </location>
    <ligand>
        <name>Zn(2+)</name>
        <dbReference type="ChEBI" id="CHEBI:29105"/>
        <label>2</label>
    </ligand>
</feature>
<feature type="binding site" evidence="4">
    <location>
        <position position="89"/>
    </location>
    <ligand>
        <name>Zn(2+)</name>
        <dbReference type="ChEBI" id="CHEBI:29105"/>
        <label>2</label>
    </ligand>
</feature>
<feature type="binding site" evidence="4">
    <location>
        <position position="97"/>
    </location>
    <ligand>
        <name>Zn(2+)</name>
        <dbReference type="ChEBI" id="CHEBI:29105"/>
        <label>1</label>
    </ligand>
</feature>
<feature type="binding site" evidence="4">
    <location>
        <position position="100"/>
    </location>
    <ligand>
        <name>Zn(2+)</name>
        <dbReference type="ChEBI" id="CHEBI:29105"/>
        <label>1</label>
    </ligand>
</feature>
<feature type="binding site" evidence="4">
    <location>
        <position position="113"/>
    </location>
    <ligand>
        <name>Zn(2+)</name>
        <dbReference type="ChEBI" id="CHEBI:29105"/>
        <label>2</label>
    </ligand>
</feature>
<feature type="binding site" evidence="4">
    <location>
        <position position="116"/>
    </location>
    <ligand>
        <name>Zn(2+)</name>
        <dbReference type="ChEBI" id="CHEBI:29105"/>
        <label>2</label>
    </ligand>
</feature>
<feature type="modified residue" description="Phosphoserine" evidence="10">
    <location>
        <position position="237"/>
    </location>
</feature>
<feature type="modified residue" description="Phosphoserine" evidence="10">
    <location>
        <position position="243"/>
    </location>
</feature>
<feature type="splice variant" id="VSP_055451" description="In isoform 2." evidence="7">
    <original>WLRNPGP</original>
    <variation>VSKWGTS</variation>
    <location>
        <begin position="132"/>
        <end position="138"/>
    </location>
</feature>
<feature type="splice variant" id="VSP_055452" description="In isoform 2." evidence="7">
    <location>
        <begin position="139"/>
        <end position="253"/>
    </location>
</feature>
<feature type="sequence variant" id="VAR_053639" description="In dbSNP:rs34821177." evidence="5">
    <original>R</original>
    <variation>Q</variation>
    <location>
        <position position="68"/>
    </location>
</feature>
<sequence length="253" mass="28504">MTTSRCSHLPEVLPDCTSSAAPVVKTVEDCGSLVNGQPQYVMQVSAKDGQLLSTVVRTLATQSPFNDRPMCRICHEGSSQEDLLSPCECTGTLGTIHRSCLEHWLSSSNTSYCELCHFRFAVERKPRPLVEWLRNPGPQHEKRTLFGDMVCFLFITPLATISGWLCLRGAVDHLHFSSRLEAVGLIALTVALFTIYLFWTLVSFRYHCRLYNEWRRTNQRVILLIPKSVNVPSNQPSLLGLHSVKRNSKETVV</sequence>
<comment type="function">
    <text evidence="2">E3 ubiquitin-protein ligase which may be involved in endosomal trafficking. E3 ubiquitin ligases accept ubiquitin from an E2 ubiquitin-conjugating enzyme in the form of a thioester and then directly transfer the ubiquitin to targeted substrates.</text>
</comment>
<comment type="catalytic activity">
    <reaction>
        <text>S-ubiquitinyl-[E2 ubiquitin-conjugating enzyme]-L-cysteine + [acceptor protein]-L-lysine = [E2 ubiquitin-conjugating enzyme]-L-cysteine + N(6)-ubiquitinyl-[acceptor protein]-L-lysine.</text>
        <dbReference type="EC" id="2.3.2.27"/>
    </reaction>
</comment>
<comment type="pathway">
    <text>Protein modification; protein ubiquitination.</text>
</comment>
<comment type="subunit">
    <text evidence="1">Interacts with MARCHF2 and STX6.</text>
</comment>
<comment type="interaction">
    <interactant intactId="EBI-2341065">
        <id>Q86UD3</id>
    </interactant>
    <interactant intactId="EBI-4290634">
        <id>Q9BQE5</id>
        <label>APOL2</label>
    </interactant>
    <organismsDiffer>false</organismsDiffer>
    <experiments>3</experiments>
</comment>
<comment type="interaction">
    <interactant intactId="EBI-2341065">
        <id>Q86UD3</id>
    </interactant>
    <interactant intactId="EBI-743099">
        <id>Q969F0</id>
        <label>FATE1</label>
    </interactant>
    <organismsDiffer>false</organismsDiffer>
    <experiments>3</experiments>
</comment>
<comment type="interaction">
    <interactant intactId="EBI-2341065">
        <id>Q86UD3</id>
    </interactant>
    <interactant intactId="EBI-473850">
        <id>P61086</id>
        <label>UBE2K</label>
    </interactant>
    <organismsDiffer>false</organismsDiffer>
    <experiments>3</experiments>
</comment>
<comment type="subcellular location">
    <subcellularLocation>
        <location evidence="6">Cytoplasmic vesicle membrane</location>
        <topology evidence="6">Multi-pass membrane protein</topology>
    </subcellularLocation>
    <subcellularLocation>
        <location evidence="6">Early endosome membrane</location>
        <topology evidence="6">Multi-pass membrane protein</topology>
    </subcellularLocation>
</comment>
<comment type="alternative products">
    <event type="alternative splicing"/>
    <isoform>
        <id>Q86UD3-1</id>
        <name>1</name>
        <sequence type="displayed"/>
    </isoform>
    <isoform>
        <id>Q86UD3-2</id>
        <name>2</name>
        <sequence type="described" ref="VSP_055451 VSP_055452"/>
    </isoform>
</comment>
<comment type="domain">
    <text evidence="4">The RING-CH-type zinc finger domain is required for E3 ligase activity.</text>
</comment>
<reference key="1">
    <citation type="journal article" date="2004" name="Nat. Genet.">
        <title>Complete sequencing and characterization of 21,243 full-length human cDNAs.</title>
        <authorList>
            <person name="Ota T."/>
            <person name="Suzuki Y."/>
            <person name="Nishikawa T."/>
            <person name="Otsuki T."/>
            <person name="Sugiyama T."/>
            <person name="Irie R."/>
            <person name="Wakamatsu A."/>
            <person name="Hayashi K."/>
            <person name="Sato H."/>
            <person name="Nagai K."/>
            <person name="Kimura K."/>
            <person name="Makita H."/>
            <person name="Sekine M."/>
            <person name="Obayashi M."/>
            <person name="Nishi T."/>
            <person name="Shibahara T."/>
            <person name="Tanaka T."/>
            <person name="Ishii S."/>
            <person name="Yamamoto J."/>
            <person name="Saito K."/>
            <person name="Kawai Y."/>
            <person name="Isono Y."/>
            <person name="Nakamura Y."/>
            <person name="Nagahari K."/>
            <person name="Murakami K."/>
            <person name="Yasuda T."/>
            <person name="Iwayanagi T."/>
            <person name="Wagatsuma M."/>
            <person name="Shiratori A."/>
            <person name="Sudo H."/>
            <person name="Hosoiri T."/>
            <person name="Kaku Y."/>
            <person name="Kodaira H."/>
            <person name="Kondo H."/>
            <person name="Sugawara M."/>
            <person name="Takahashi M."/>
            <person name="Kanda K."/>
            <person name="Yokoi T."/>
            <person name="Furuya T."/>
            <person name="Kikkawa E."/>
            <person name="Omura Y."/>
            <person name="Abe K."/>
            <person name="Kamihara K."/>
            <person name="Katsuta N."/>
            <person name="Sato K."/>
            <person name="Tanikawa M."/>
            <person name="Yamazaki M."/>
            <person name="Ninomiya K."/>
            <person name="Ishibashi T."/>
            <person name="Yamashita H."/>
            <person name="Murakawa K."/>
            <person name="Fujimori K."/>
            <person name="Tanai H."/>
            <person name="Kimata M."/>
            <person name="Watanabe M."/>
            <person name="Hiraoka S."/>
            <person name="Chiba Y."/>
            <person name="Ishida S."/>
            <person name="Ono Y."/>
            <person name="Takiguchi S."/>
            <person name="Watanabe S."/>
            <person name="Yosida M."/>
            <person name="Hotuta T."/>
            <person name="Kusano J."/>
            <person name="Kanehori K."/>
            <person name="Takahashi-Fujii A."/>
            <person name="Hara H."/>
            <person name="Tanase T.-O."/>
            <person name="Nomura Y."/>
            <person name="Togiya S."/>
            <person name="Komai F."/>
            <person name="Hara R."/>
            <person name="Takeuchi K."/>
            <person name="Arita M."/>
            <person name="Imose N."/>
            <person name="Musashino K."/>
            <person name="Yuuki H."/>
            <person name="Oshima A."/>
            <person name="Sasaki N."/>
            <person name="Aotsuka S."/>
            <person name="Yoshikawa Y."/>
            <person name="Matsunawa H."/>
            <person name="Ichihara T."/>
            <person name="Shiohata N."/>
            <person name="Sano S."/>
            <person name="Moriya S."/>
            <person name="Momiyama H."/>
            <person name="Satoh N."/>
            <person name="Takami S."/>
            <person name="Terashima Y."/>
            <person name="Suzuki O."/>
            <person name="Nakagawa S."/>
            <person name="Senoh A."/>
            <person name="Mizoguchi H."/>
            <person name="Goto Y."/>
            <person name="Shimizu F."/>
            <person name="Wakebe H."/>
            <person name="Hishigaki H."/>
            <person name="Watanabe T."/>
            <person name="Sugiyama A."/>
            <person name="Takemoto M."/>
            <person name="Kawakami B."/>
            <person name="Yamazaki M."/>
            <person name="Watanabe K."/>
            <person name="Kumagai A."/>
            <person name="Itakura S."/>
            <person name="Fukuzumi Y."/>
            <person name="Fujimori Y."/>
            <person name="Komiyama M."/>
            <person name="Tashiro H."/>
            <person name="Tanigami A."/>
            <person name="Fujiwara T."/>
            <person name="Ono T."/>
            <person name="Yamada K."/>
            <person name="Fujii Y."/>
            <person name="Ozaki K."/>
            <person name="Hirao M."/>
            <person name="Ohmori Y."/>
            <person name="Kawabata A."/>
            <person name="Hikiji T."/>
            <person name="Kobatake N."/>
            <person name="Inagaki H."/>
            <person name="Ikema Y."/>
            <person name="Okamoto S."/>
            <person name="Okitani R."/>
            <person name="Kawakami T."/>
            <person name="Noguchi S."/>
            <person name="Itoh T."/>
            <person name="Shigeta K."/>
            <person name="Senba T."/>
            <person name="Matsumura K."/>
            <person name="Nakajima Y."/>
            <person name="Mizuno T."/>
            <person name="Morinaga M."/>
            <person name="Sasaki M."/>
            <person name="Togashi T."/>
            <person name="Oyama M."/>
            <person name="Hata H."/>
            <person name="Watanabe M."/>
            <person name="Komatsu T."/>
            <person name="Mizushima-Sugano J."/>
            <person name="Satoh T."/>
            <person name="Shirai Y."/>
            <person name="Takahashi Y."/>
            <person name="Nakagawa K."/>
            <person name="Okumura K."/>
            <person name="Nagase T."/>
            <person name="Nomura N."/>
            <person name="Kikuchi H."/>
            <person name="Masuho Y."/>
            <person name="Yamashita R."/>
            <person name="Nakai K."/>
            <person name="Yada T."/>
            <person name="Nakamura Y."/>
            <person name="Ohara O."/>
            <person name="Isogai T."/>
            <person name="Sugano S."/>
        </authorList>
    </citation>
    <scope>NUCLEOTIDE SEQUENCE [LARGE SCALE MRNA] (ISOFORM 1)</scope>
    <scope>VARIANT GLN-68</scope>
    <source>
        <tissue>Thalamus</tissue>
    </source>
</reference>
<reference key="2">
    <citation type="journal article" date="2004" name="Nature">
        <title>The DNA sequence and comparative analysis of human chromosome 5.</title>
        <authorList>
            <person name="Schmutz J."/>
            <person name="Martin J."/>
            <person name="Terry A."/>
            <person name="Couronne O."/>
            <person name="Grimwood J."/>
            <person name="Lowry S."/>
            <person name="Gordon L.A."/>
            <person name="Scott D."/>
            <person name="Xie G."/>
            <person name="Huang W."/>
            <person name="Hellsten U."/>
            <person name="Tran-Gyamfi M."/>
            <person name="She X."/>
            <person name="Prabhakar S."/>
            <person name="Aerts A."/>
            <person name="Altherr M."/>
            <person name="Bajorek E."/>
            <person name="Black S."/>
            <person name="Branscomb E."/>
            <person name="Caoile C."/>
            <person name="Challacombe J.F."/>
            <person name="Chan Y.M."/>
            <person name="Denys M."/>
            <person name="Detter J.C."/>
            <person name="Escobar J."/>
            <person name="Flowers D."/>
            <person name="Fotopulos D."/>
            <person name="Glavina T."/>
            <person name="Gomez M."/>
            <person name="Gonzales E."/>
            <person name="Goodstein D."/>
            <person name="Grigoriev I."/>
            <person name="Groza M."/>
            <person name="Hammon N."/>
            <person name="Hawkins T."/>
            <person name="Haydu L."/>
            <person name="Israni S."/>
            <person name="Jett J."/>
            <person name="Kadner K."/>
            <person name="Kimball H."/>
            <person name="Kobayashi A."/>
            <person name="Lopez F."/>
            <person name="Lou Y."/>
            <person name="Martinez D."/>
            <person name="Medina C."/>
            <person name="Morgan J."/>
            <person name="Nandkeshwar R."/>
            <person name="Noonan J.P."/>
            <person name="Pitluck S."/>
            <person name="Pollard M."/>
            <person name="Predki P."/>
            <person name="Priest J."/>
            <person name="Ramirez L."/>
            <person name="Retterer J."/>
            <person name="Rodriguez A."/>
            <person name="Rogers S."/>
            <person name="Salamov A."/>
            <person name="Salazar A."/>
            <person name="Thayer N."/>
            <person name="Tice H."/>
            <person name="Tsai M."/>
            <person name="Ustaszewska A."/>
            <person name="Vo N."/>
            <person name="Wheeler J."/>
            <person name="Wu K."/>
            <person name="Yang J."/>
            <person name="Dickson M."/>
            <person name="Cheng J.-F."/>
            <person name="Eichler E.E."/>
            <person name="Olsen A."/>
            <person name="Pennacchio L.A."/>
            <person name="Rokhsar D.S."/>
            <person name="Richardson P."/>
            <person name="Lucas S.M."/>
            <person name="Myers R.M."/>
            <person name="Rubin E.M."/>
        </authorList>
    </citation>
    <scope>NUCLEOTIDE SEQUENCE [LARGE SCALE GENOMIC DNA]</scope>
</reference>
<reference key="3">
    <citation type="submission" date="2005-09" db="EMBL/GenBank/DDBJ databases">
        <authorList>
            <person name="Mural R.J."/>
            <person name="Istrail S."/>
            <person name="Sutton G."/>
            <person name="Florea L."/>
            <person name="Halpern A.L."/>
            <person name="Mobarry C.M."/>
            <person name="Lippert R."/>
            <person name="Walenz B."/>
            <person name="Shatkay H."/>
            <person name="Dew I."/>
            <person name="Miller J.R."/>
            <person name="Flanigan M.J."/>
            <person name="Edwards N.J."/>
            <person name="Bolanos R."/>
            <person name="Fasulo D."/>
            <person name="Halldorsson B.V."/>
            <person name="Hannenhalli S."/>
            <person name="Turner R."/>
            <person name="Yooseph S."/>
            <person name="Lu F."/>
            <person name="Nusskern D.R."/>
            <person name="Shue B.C."/>
            <person name="Zheng X.H."/>
            <person name="Zhong F."/>
            <person name="Delcher A.L."/>
            <person name="Huson D.H."/>
            <person name="Kravitz S.A."/>
            <person name="Mouchard L."/>
            <person name="Reinert K."/>
            <person name="Remington K.A."/>
            <person name="Clark A.G."/>
            <person name="Waterman M.S."/>
            <person name="Eichler E.E."/>
            <person name="Adams M.D."/>
            <person name="Hunkapiller M.W."/>
            <person name="Myers E.W."/>
            <person name="Venter J.C."/>
        </authorList>
    </citation>
    <scope>NUCLEOTIDE SEQUENCE [LARGE SCALE GENOMIC DNA]</scope>
</reference>
<reference key="4">
    <citation type="journal article" date="2004" name="Genome Res.">
        <title>The status, quality, and expansion of the NIH full-length cDNA project: the Mammalian Gene Collection (MGC).</title>
        <authorList>
            <consortium name="The MGC Project Team"/>
        </authorList>
    </citation>
    <scope>NUCLEOTIDE SEQUENCE [LARGE SCALE MRNA] (ISOFORMS 1 AND 2)</scope>
    <source>
        <tissue>Brain</tissue>
    </source>
</reference>
<reference key="5">
    <citation type="journal article" date="2006" name="J. Biochem.">
        <title>MARCH-III is a novel component of endosomes with properties similar to those of MARCH-II.</title>
        <authorList>
            <person name="Fukuda H."/>
            <person name="Nakamura N."/>
            <person name="Hirose S."/>
        </authorList>
    </citation>
    <scope>SUBCELLULAR LOCATION</scope>
</reference>
<reference key="6">
    <citation type="journal article" date="2013" name="J. Proteome Res.">
        <title>Toward a comprehensive characterization of a human cancer cell phosphoproteome.</title>
        <authorList>
            <person name="Zhou H."/>
            <person name="Di Palma S."/>
            <person name="Preisinger C."/>
            <person name="Peng M."/>
            <person name="Polat A.N."/>
            <person name="Heck A.J."/>
            <person name="Mohammed S."/>
        </authorList>
    </citation>
    <scope>PHOSPHORYLATION [LARGE SCALE ANALYSIS] AT SER-237 AND SER-243</scope>
    <scope>IDENTIFICATION BY MASS SPECTROMETRY [LARGE SCALE ANALYSIS]</scope>
    <source>
        <tissue>Erythroleukemia</tissue>
    </source>
</reference>
<protein>
    <recommendedName>
        <fullName>E3 ubiquitin-protein ligase MARCHF3</fullName>
        <ecNumber>2.3.2.27</ecNumber>
    </recommendedName>
    <alternativeName>
        <fullName>Membrane-associated RING finger protein 3</fullName>
    </alternativeName>
    <alternativeName>
        <fullName>Membrane-associated RING-CH protein III</fullName>
        <shortName>MARCH-III</shortName>
    </alternativeName>
    <alternativeName>
        <fullName>RING finger protein 173</fullName>
    </alternativeName>
    <alternativeName>
        <fullName evidence="8">RING-type E3 ubiquitin transferase MARCHF3</fullName>
    </alternativeName>
</protein>
<keyword id="KW-0025">Alternative splicing</keyword>
<keyword id="KW-0968">Cytoplasmic vesicle</keyword>
<keyword id="KW-0254">Endocytosis</keyword>
<keyword id="KW-0967">Endosome</keyword>
<keyword id="KW-0472">Membrane</keyword>
<keyword id="KW-0479">Metal-binding</keyword>
<keyword id="KW-0597">Phosphoprotein</keyword>
<keyword id="KW-1267">Proteomics identification</keyword>
<keyword id="KW-1185">Reference proteome</keyword>
<keyword id="KW-0808">Transferase</keyword>
<keyword id="KW-0812">Transmembrane</keyword>
<keyword id="KW-1133">Transmembrane helix</keyword>
<keyword id="KW-0833">Ubl conjugation pathway</keyword>
<keyword id="KW-0862">Zinc</keyword>
<keyword id="KW-0863">Zinc-finger</keyword>
<accession>Q86UD3</accession>
<accession>A8K264</accession>
<accession>B9EJE7</accession>
<gene>
    <name evidence="9" type="primary">MARCHF3</name>
    <name type="synonym">MARCH3</name>
    <name type="synonym">RNF173</name>
</gene>
<proteinExistence type="evidence at protein level"/>